<feature type="chain" id="PRO_1000200691" description="Cell division protein ZipA">
    <location>
        <begin position="1"/>
        <end position="304"/>
    </location>
</feature>
<feature type="topological domain" description="Periplasmic" evidence="1">
    <location>
        <begin position="1"/>
        <end position="5"/>
    </location>
</feature>
<feature type="transmembrane region" description="Helical" evidence="1">
    <location>
        <begin position="6"/>
        <end position="26"/>
    </location>
</feature>
<feature type="topological domain" description="Cytoplasmic" evidence="1">
    <location>
        <begin position="27"/>
        <end position="304"/>
    </location>
</feature>
<feature type="region of interest" description="Disordered" evidence="2">
    <location>
        <begin position="31"/>
        <end position="165"/>
    </location>
</feature>
<feature type="compositionally biased region" description="Basic and acidic residues" evidence="2">
    <location>
        <begin position="121"/>
        <end position="132"/>
    </location>
</feature>
<feature type="compositionally biased region" description="Low complexity" evidence="2">
    <location>
        <begin position="137"/>
        <end position="158"/>
    </location>
</feature>
<dbReference type="EMBL" id="CU468135">
    <property type="protein sequence ID" value="CAO96148.1"/>
    <property type="molecule type" value="Genomic_DNA"/>
</dbReference>
<dbReference type="SMR" id="B2VE39"/>
<dbReference type="STRING" id="465817.ETA_11020"/>
<dbReference type="KEGG" id="eta:ETA_11020"/>
<dbReference type="eggNOG" id="COG3115">
    <property type="taxonomic scope" value="Bacteria"/>
</dbReference>
<dbReference type="HOGENOM" id="CLU_030174_1_0_6"/>
<dbReference type="Proteomes" id="UP000001726">
    <property type="component" value="Chromosome"/>
</dbReference>
<dbReference type="GO" id="GO:0032153">
    <property type="term" value="C:cell division site"/>
    <property type="evidence" value="ECO:0007669"/>
    <property type="project" value="UniProtKB-UniRule"/>
</dbReference>
<dbReference type="GO" id="GO:0005886">
    <property type="term" value="C:plasma membrane"/>
    <property type="evidence" value="ECO:0007669"/>
    <property type="project" value="UniProtKB-SubCell"/>
</dbReference>
<dbReference type="GO" id="GO:0000917">
    <property type="term" value="P:division septum assembly"/>
    <property type="evidence" value="ECO:0007669"/>
    <property type="project" value="TreeGrafter"/>
</dbReference>
<dbReference type="GO" id="GO:0043093">
    <property type="term" value="P:FtsZ-dependent cytokinesis"/>
    <property type="evidence" value="ECO:0007669"/>
    <property type="project" value="UniProtKB-UniRule"/>
</dbReference>
<dbReference type="CDD" id="cd00231">
    <property type="entry name" value="ZipA"/>
    <property type="match status" value="1"/>
</dbReference>
<dbReference type="FunFam" id="3.30.1400.10:FF:000001">
    <property type="entry name" value="Cell division protein ZipA"/>
    <property type="match status" value="1"/>
</dbReference>
<dbReference type="Gene3D" id="3.30.1400.10">
    <property type="entry name" value="ZipA, C-terminal FtsZ-binding domain"/>
    <property type="match status" value="1"/>
</dbReference>
<dbReference type="HAMAP" id="MF_00509">
    <property type="entry name" value="ZipA"/>
    <property type="match status" value="1"/>
</dbReference>
<dbReference type="InterPro" id="IPR011919">
    <property type="entry name" value="Cell_div_ZipA"/>
</dbReference>
<dbReference type="InterPro" id="IPR007449">
    <property type="entry name" value="ZipA_FtsZ-bd_C"/>
</dbReference>
<dbReference type="InterPro" id="IPR036765">
    <property type="entry name" value="ZipA_FtsZ-bd_C_sf"/>
</dbReference>
<dbReference type="NCBIfam" id="TIGR02205">
    <property type="entry name" value="septum_zipA"/>
    <property type="match status" value="1"/>
</dbReference>
<dbReference type="PANTHER" id="PTHR38685">
    <property type="entry name" value="CELL DIVISION PROTEIN ZIPA"/>
    <property type="match status" value="1"/>
</dbReference>
<dbReference type="PANTHER" id="PTHR38685:SF1">
    <property type="entry name" value="CELL DIVISION PROTEIN ZIPA"/>
    <property type="match status" value="1"/>
</dbReference>
<dbReference type="Pfam" id="PF04354">
    <property type="entry name" value="ZipA_C"/>
    <property type="match status" value="1"/>
</dbReference>
<dbReference type="SMART" id="SM00771">
    <property type="entry name" value="ZipA_C"/>
    <property type="match status" value="1"/>
</dbReference>
<dbReference type="SUPFAM" id="SSF64383">
    <property type="entry name" value="Cell-division protein ZipA, C-terminal domain"/>
    <property type="match status" value="1"/>
</dbReference>
<evidence type="ECO:0000255" key="1">
    <source>
        <dbReference type="HAMAP-Rule" id="MF_00509"/>
    </source>
</evidence>
<evidence type="ECO:0000256" key="2">
    <source>
        <dbReference type="SAM" id="MobiDB-lite"/>
    </source>
</evidence>
<proteinExistence type="inferred from homology"/>
<name>ZIPA_ERWT9</name>
<keyword id="KW-0131">Cell cycle</keyword>
<keyword id="KW-0132">Cell division</keyword>
<keyword id="KW-0997">Cell inner membrane</keyword>
<keyword id="KW-1003">Cell membrane</keyword>
<keyword id="KW-0472">Membrane</keyword>
<keyword id="KW-1185">Reference proteome</keyword>
<keyword id="KW-0812">Transmembrane</keyword>
<keyword id="KW-1133">Transmembrane helix</keyword>
<reference key="1">
    <citation type="journal article" date="2008" name="Environ. Microbiol.">
        <title>The genome of Erwinia tasmaniensis strain Et1/99, a non-pathogenic bacterium in the genus Erwinia.</title>
        <authorList>
            <person name="Kube M."/>
            <person name="Migdoll A.M."/>
            <person name="Mueller I."/>
            <person name="Kuhl H."/>
            <person name="Beck A."/>
            <person name="Reinhardt R."/>
            <person name="Geider K."/>
        </authorList>
    </citation>
    <scope>NUCLEOTIDE SEQUENCE [LARGE SCALE GENOMIC DNA]</scope>
    <source>
        <strain>DSM 17950 / CFBP 7177 / CIP 109463 / NCPPB 4357 / Et1/99</strain>
    </source>
</reference>
<sequence length="304" mass="33220">MQDLRLILIVVGAIAIIALLLHGLWTSRKERSSVFRDRPHKRLKQNREEAFEDDEEGVGEVRTHRASAEAPEPSLGELDPGDTPPRHGKAQPVPERPEPKVEEPSGEDPLFSGEPPHASRARPETHKPDQPETSHIAAPAAAETAPAPAEPAQKTPEPQSQPKQKETVLVLHVSAHAGGSINGEALLQGVLQAGFQFGEMNIFHRHLNPAGSGPVLFSLANMVKPGSFNPENMSEFSTPGVSIFMMVPSYGDAHQNFKLMLQSAQRIADDVGGVVLDDERRMMTPQKLETYKARIRDVIDANSH</sequence>
<gene>
    <name evidence="1" type="primary">zipA</name>
    <name type="ordered locus">ETA_11020</name>
</gene>
<comment type="function">
    <text evidence="1">Essential cell division protein that stabilizes the FtsZ protofilaments by cross-linking them and that serves as a cytoplasmic membrane anchor for the Z ring. Also required for the recruitment to the septal ring of downstream cell division proteins.</text>
</comment>
<comment type="subunit">
    <text evidence="1">Interacts with FtsZ via their C-terminal domains.</text>
</comment>
<comment type="subcellular location">
    <subcellularLocation>
        <location evidence="1">Cell inner membrane</location>
        <topology evidence="1">Single-pass type I membrane protein</topology>
    </subcellularLocation>
    <text evidence="1">Localizes to the Z ring in an FtsZ-dependent manner.</text>
</comment>
<comment type="similarity">
    <text evidence="1">Belongs to the ZipA family.</text>
</comment>
<organism>
    <name type="scientific">Erwinia tasmaniensis (strain DSM 17950 / CFBP 7177 / CIP 109463 / NCPPB 4357 / Et1/99)</name>
    <dbReference type="NCBI Taxonomy" id="465817"/>
    <lineage>
        <taxon>Bacteria</taxon>
        <taxon>Pseudomonadati</taxon>
        <taxon>Pseudomonadota</taxon>
        <taxon>Gammaproteobacteria</taxon>
        <taxon>Enterobacterales</taxon>
        <taxon>Erwiniaceae</taxon>
        <taxon>Erwinia</taxon>
    </lineage>
</organism>
<protein>
    <recommendedName>
        <fullName evidence="1">Cell division protein ZipA</fullName>
    </recommendedName>
</protein>
<accession>B2VE39</accession>